<feature type="chain" id="PRO_1000203436" description="Probable endonuclease 4">
    <location>
        <begin position="1"/>
        <end position="279"/>
    </location>
</feature>
<feature type="binding site" evidence="1">
    <location>
        <position position="69"/>
    </location>
    <ligand>
        <name>Zn(2+)</name>
        <dbReference type="ChEBI" id="CHEBI:29105"/>
        <label>1</label>
    </ligand>
</feature>
<feature type="binding site" evidence="1">
    <location>
        <position position="109"/>
    </location>
    <ligand>
        <name>Zn(2+)</name>
        <dbReference type="ChEBI" id="CHEBI:29105"/>
        <label>1</label>
    </ligand>
</feature>
<feature type="binding site" evidence="1">
    <location>
        <position position="145"/>
    </location>
    <ligand>
        <name>Zn(2+)</name>
        <dbReference type="ChEBI" id="CHEBI:29105"/>
        <label>1</label>
    </ligand>
</feature>
<feature type="binding site" evidence="1">
    <location>
        <position position="145"/>
    </location>
    <ligand>
        <name>Zn(2+)</name>
        <dbReference type="ChEBI" id="CHEBI:29105"/>
        <label>2</label>
    </ligand>
</feature>
<feature type="binding site" evidence="1">
    <location>
        <position position="179"/>
    </location>
    <ligand>
        <name>Zn(2+)</name>
        <dbReference type="ChEBI" id="CHEBI:29105"/>
        <label>2</label>
    </ligand>
</feature>
<feature type="binding site" evidence="1">
    <location>
        <position position="182"/>
    </location>
    <ligand>
        <name>Zn(2+)</name>
        <dbReference type="ChEBI" id="CHEBI:29105"/>
        <label>3</label>
    </ligand>
</feature>
<feature type="binding site" evidence="1">
    <location>
        <position position="216"/>
    </location>
    <ligand>
        <name>Zn(2+)</name>
        <dbReference type="ChEBI" id="CHEBI:29105"/>
        <label>2</label>
    </ligand>
</feature>
<feature type="binding site" evidence="1">
    <location>
        <position position="229"/>
    </location>
    <ligand>
        <name>Zn(2+)</name>
        <dbReference type="ChEBI" id="CHEBI:29105"/>
        <label>3</label>
    </ligand>
</feature>
<feature type="binding site" evidence="1">
    <location>
        <position position="231"/>
    </location>
    <ligand>
        <name>Zn(2+)</name>
        <dbReference type="ChEBI" id="CHEBI:29105"/>
        <label>3</label>
    </ligand>
</feature>
<feature type="binding site" evidence="1">
    <location>
        <position position="261"/>
    </location>
    <ligand>
        <name>Zn(2+)</name>
        <dbReference type="ChEBI" id="CHEBI:29105"/>
        <label>2</label>
    </ligand>
</feature>
<reference key="1">
    <citation type="journal article" date="2009" name="Environ. Microbiol.">
        <title>Genome sequence of Desulfobacterium autotrophicum HRM2, a marine sulfate reducer oxidizing organic carbon completely to carbon dioxide.</title>
        <authorList>
            <person name="Strittmatter A.W."/>
            <person name="Liesegang H."/>
            <person name="Rabus R."/>
            <person name="Decker I."/>
            <person name="Amann J."/>
            <person name="Andres S."/>
            <person name="Henne A."/>
            <person name="Fricke W.F."/>
            <person name="Martinez-Arias R."/>
            <person name="Bartels D."/>
            <person name="Goesmann A."/>
            <person name="Krause L."/>
            <person name="Puehler A."/>
            <person name="Klenk H.P."/>
            <person name="Richter M."/>
            <person name="Schuler M."/>
            <person name="Gloeckner F.O."/>
            <person name="Meyerdierks A."/>
            <person name="Gottschalk G."/>
            <person name="Amann R."/>
        </authorList>
    </citation>
    <scope>NUCLEOTIDE SEQUENCE [LARGE SCALE GENOMIC DNA]</scope>
    <source>
        <strain>ATCC 43914 / DSM 3382 / VKM B-1955 / HRM2</strain>
    </source>
</reference>
<name>END4_DESAH</name>
<organism>
    <name type="scientific">Desulforapulum autotrophicum (strain ATCC 43914 / DSM 3382 / VKM B-1955 / HRM2)</name>
    <name type="common">Desulfobacterium autotrophicum</name>
    <dbReference type="NCBI Taxonomy" id="177437"/>
    <lineage>
        <taxon>Bacteria</taxon>
        <taxon>Pseudomonadati</taxon>
        <taxon>Thermodesulfobacteriota</taxon>
        <taxon>Desulfobacteria</taxon>
        <taxon>Desulfobacterales</taxon>
        <taxon>Desulfobacteraceae</taxon>
        <taxon>Desulforapulum</taxon>
    </lineage>
</organism>
<proteinExistence type="inferred from homology"/>
<dbReference type="EC" id="3.1.21.2" evidence="1"/>
<dbReference type="EMBL" id="CP001087">
    <property type="protein sequence ID" value="ACN16478.1"/>
    <property type="molecule type" value="Genomic_DNA"/>
</dbReference>
<dbReference type="RefSeq" id="WP_015905239.1">
    <property type="nucleotide sequence ID" value="NC_012108.1"/>
</dbReference>
<dbReference type="SMR" id="C0QMG1"/>
<dbReference type="STRING" id="177437.HRM2_34030"/>
<dbReference type="KEGG" id="dat:HRM2_34030"/>
<dbReference type="eggNOG" id="COG0648">
    <property type="taxonomic scope" value="Bacteria"/>
</dbReference>
<dbReference type="HOGENOM" id="CLU_025885_0_4_7"/>
<dbReference type="OrthoDB" id="9805666at2"/>
<dbReference type="Proteomes" id="UP000000442">
    <property type="component" value="Chromosome"/>
</dbReference>
<dbReference type="GO" id="GO:0008833">
    <property type="term" value="F:deoxyribonuclease IV (phage-T4-induced) activity"/>
    <property type="evidence" value="ECO:0007669"/>
    <property type="project" value="UniProtKB-UniRule"/>
</dbReference>
<dbReference type="GO" id="GO:0003677">
    <property type="term" value="F:DNA binding"/>
    <property type="evidence" value="ECO:0007669"/>
    <property type="project" value="InterPro"/>
</dbReference>
<dbReference type="GO" id="GO:0003906">
    <property type="term" value="F:DNA-(apurinic or apyrimidinic site) endonuclease activity"/>
    <property type="evidence" value="ECO:0007669"/>
    <property type="project" value="TreeGrafter"/>
</dbReference>
<dbReference type="GO" id="GO:0008081">
    <property type="term" value="F:phosphoric diester hydrolase activity"/>
    <property type="evidence" value="ECO:0007669"/>
    <property type="project" value="TreeGrafter"/>
</dbReference>
<dbReference type="GO" id="GO:0008270">
    <property type="term" value="F:zinc ion binding"/>
    <property type="evidence" value="ECO:0007669"/>
    <property type="project" value="UniProtKB-UniRule"/>
</dbReference>
<dbReference type="GO" id="GO:0006284">
    <property type="term" value="P:base-excision repair"/>
    <property type="evidence" value="ECO:0007669"/>
    <property type="project" value="TreeGrafter"/>
</dbReference>
<dbReference type="CDD" id="cd00019">
    <property type="entry name" value="AP2Ec"/>
    <property type="match status" value="1"/>
</dbReference>
<dbReference type="FunFam" id="3.20.20.150:FF:000001">
    <property type="entry name" value="Probable endonuclease 4"/>
    <property type="match status" value="1"/>
</dbReference>
<dbReference type="Gene3D" id="3.20.20.150">
    <property type="entry name" value="Divalent-metal-dependent TIM barrel enzymes"/>
    <property type="match status" value="1"/>
</dbReference>
<dbReference type="HAMAP" id="MF_00152">
    <property type="entry name" value="Nfo"/>
    <property type="match status" value="1"/>
</dbReference>
<dbReference type="InterPro" id="IPR001719">
    <property type="entry name" value="AP_endonuc_2"/>
</dbReference>
<dbReference type="InterPro" id="IPR018246">
    <property type="entry name" value="AP_endonuc_F2_Zn_BS"/>
</dbReference>
<dbReference type="InterPro" id="IPR036237">
    <property type="entry name" value="Xyl_isomerase-like_sf"/>
</dbReference>
<dbReference type="InterPro" id="IPR013022">
    <property type="entry name" value="Xyl_isomerase-like_TIM-brl"/>
</dbReference>
<dbReference type="NCBIfam" id="TIGR00587">
    <property type="entry name" value="nfo"/>
    <property type="match status" value="1"/>
</dbReference>
<dbReference type="NCBIfam" id="NF002199">
    <property type="entry name" value="PRK01060.1-4"/>
    <property type="match status" value="1"/>
</dbReference>
<dbReference type="PANTHER" id="PTHR21445:SF0">
    <property type="entry name" value="APURINIC-APYRIMIDINIC ENDONUCLEASE"/>
    <property type="match status" value="1"/>
</dbReference>
<dbReference type="PANTHER" id="PTHR21445">
    <property type="entry name" value="ENDONUCLEASE IV ENDODEOXYRIBONUCLEASE IV"/>
    <property type="match status" value="1"/>
</dbReference>
<dbReference type="Pfam" id="PF01261">
    <property type="entry name" value="AP_endonuc_2"/>
    <property type="match status" value="1"/>
</dbReference>
<dbReference type="SMART" id="SM00518">
    <property type="entry name" value="AP2Ec"/>
    <property type="match status" value="1"/>
</dbReference>
<dbReference type="SUPFAM" id="SSF51658">
    <property type="entry name" value="Xylose isomerase-like"/>
    <property type="match status" value="1"/>
</dbReference>
<dbReference type="PROSITE" id="PS00729">
    <property type="entry name" value="AP_NUCLEASE_F2_1"/>
    <property type="match status" value="1"/>
</dbReference>
<dbReference type="PROSITE" id="PS00730">
    <property type="entry name" value="AP_NUCLEASE_F2_2"/>
    <property type="match status" value="1"/>
</dbReference>
<dbReference type="PROSITE" id="PS00731">
    <property type="entry name" value="AP_NUCLEASE_F2_3"/>
    <property type="match status" value="1"/>
</dbReference>
<dbReference type="PROSITE" id="PS51432">
    <property type="entry name" value="AP_NUCLEASE_F2_4"/>
    <property type="match status" value="1"/>
</dbReference>
<sequence>MKYIGAHVSAAGGVENAPKNAGLIGATAFALFTKNQRQWKAKTLTEKSILGFKEACRTLGYGPGQILAHDSYLINLGHPDRESLEKSRAAFVDEMERCQQLGISLLNFHPGSHLGRIDIDPCLATIAASINLALEQTQDVTAVIENTAGQGTNLGFDFSQIRTIIDQVEDKTRVGVCLDTCHSFSAGYDLKSEHGFHQTFETFDRVIGFDYLKGMHLNDSTKAMGSRVDRHASLGQGTLGMAPFERIMKDTRFDNIPLILETPDPSLWASEIQQLRAFL</sequence>
<accession>C0QMG1</accession>
<protein>
    <recommendedName>
        <fullName evidence="1">Probable endonuclease 4</fullName>
        <ecNumber evidence="1">3.1.21.2</ecNumber>
    </recommendedName>
    <alternativeName>
        <fullName evidence="1">Endodeoxyribonuclease IV</fullName>
    </alternativeName>
    <alternativeName>
        <fullName evidence="1">Endonuclease IV</fullName>
    </alternativeName>
</protein>
<keyword id="KW-0227">DNA damage</keyword>
<keyword id="KW-0234">DNA repair</keyword>
<keyword id="KW-0255">Endonuclease</keyword>
<keyword id="KW-0378">Hydrolase</keyword>
<keyword id="KW-0479">Metal-binding</keyword>
<keyword id="KW-0540">Nuclease</keyword>
<keyword id="KW-1185">Reference proteome</keyword>
<keyword id="KW-0862">Zinc</keyword>
<comment type="function">
    <text evidence="1">Endonuclease IV plays a role in DNA repair. It cleaves phosphodiester bonds at apurinic or apyrimidinic (AP) sites, generating a 3'-hydroxyl group and a 5'-terminal sugar phosphate.</text>
</comment>
<comment type="catalytic activity">
    <reaction evidence="1">
        <text>Endonucleolytic cleavage to 5'-phosphooligonucleotide end-products.</text>
        <dbReference type="EC" id="3.1.21.2"/>
    </reaction>
</comment>
<comment type="cofactor">
    <cofactor evidence="1">
        <name>Zn(2+)</name>
        <dbReference type="ChEBI" id="CHEBI:29105"/>
    </cofactor>
    <text evidence="1">Binds 3 Zn(2+) ions.</text>
</comment>
<comment type="similarity">
    <text evidence="1">Belongs to the AP endonuclease 2 family.</text>
</comment>
<gene>
    <name evidence="1" type="primary">nfo</name>
    <name type="ordered locus">HRM2_34030</name>
</gene>
<evidence type="ECO:0000255" key="1">
    <source>
        <dbReference type="HAMAP-Rule" id="MF_00152"/>
    </source>
</evidence>